<feature type="chain" id="PRO_0000254218" description="ATP synthase subunit beta">
    <location>
        <begin position="1"/>
        <end position="490"/>
    </location>
</feature>
<feature type="binding site" evidence="1">
    <location>
        <begin position="173"/>
        <end position="180"/>
    </location>
    <ligand>
        <name>ATP</name>
        <dbReference type="ChEBI" id="CHEBI:30616"/>
    </ligand>
</feature>
<keyword id="KW-0066">ATP synthesis</keyword>
<keyword id="KW-0067">ATP-binding</keyword>
<keyword id="KW-1003">Cell membrane</keyword>
<keyword id="KW-0139">CF(1)</keyword>
<keyword id="KW-0375">Hydrogen ion transport</keyword>
<keyword id="KW-0406">Ion transport</keyword>
<keyword id="KW-0472">Membrane</keyword>
<keyword id="KW-0547">Nucleotide-binding</keyword>
<keyword id="KW-1185">Reference proteome</keyword>
<keyword id="KW-1278">Translocase</keyword>
<keyword id="KW-0813">Transport</keyword>
<accession>Q8G7B3</accession>
<sequence>MADNQTTAAEPTNGRVTRVQGSVIDVEFPVGHLPDIYNALKVTIVNTSAKEEGEAKETEITLEVEQHLGDSTVRCVALKPTDGLVRGASVSDTGAPISVPVGDVTKGHVFDVSGNILNKKPDETITVSERWPIHRNPPAFDQLESKTQMFETGIKVIDLLTPYVQGGKIGLFGGAGVGKTVLIQEMIQRVAQNHGGVSVFAGVGERTREGNDLIGEMAEAGVLEKTALVFGQMDEQPGTRLRVPLTALTMAEYFRDVQNQDVLLFIDNIFRFTQAGSEVSTLLGRMPSAVGYQPNLADEMGSLQERITSTRGHSITSLQAIYVPADDYTDPAPATTFAHLDATTELSRDIASKGIYPAVDPLSSTSRILDPRYVGQAHYDCANRVKAILQRNKELQDIIALIGIDELGEEDKTTVNRARKIEQFLGQNFYVAEKFTGRPGSYVPADETIEAFTRICDGVYDDVPEQAFSGIGGIDDLEEKWHNMQKELGA</sequence>
<name>ATPB_BIFLO</name>
<protein>
    <recommendedName>
        <fullName evidence="1">ATP synthase subunit beta</fullName>
        <ecNumber evidence="1">7.1.2.2</ecNumber>
    </recommendedName>
    <alternativeName>
        <fullName evidence="1">ATP synthase F1 sector subunit beta</fullName>
    </alternativeName>
    <alternativeName>
        <fullName evidence="1">F-ATPase subunit beta</fullName>
    </alternativeName>
</protein>
<gene>
    <name evidence="1" type="primary">atpD</name>
    <name type="ordered locus">BL0357</name>
</gene>
<evidence type="ECO:0000255" key="1">
    <source>
        <dbReference type="HAMAP-Rule" id="MF_01347"/>
    </source>
</evidence>
<dbReference type="EC" id="7.1.2.2" evidence="1"/>
<dbReference type="EMBL" id="AE014295">
    <property type="protein sequence ID" value="AAN24195.1"/>
    <property type="molecule type" value="Genomic_DNA"/>
</dbReference>
<dbReference type="RefSeq" id="NP_695559.1">
    <property type="nucleotide sequence ID" value="NC_004307.2"/>
</dbReference>
<dbReference type="RefSeq" id="WP_007051478.1">
    <property type="nucleotide sequence ID" value="NC_004307.2"/>
</dbReference>
<dbReference type="SMR" id="Q8G7B3"/>
<dbReference type="STRING" id="206672.BL0357"/>
<dbReference type="EnsemblBacteria" id="AAN24195">
    <property type="protein sequence ID" value="AAN24195"/>
    <property type="gene ID" value="BL0357"/>
</dbReference>
<dbReference type="GeneID" id="69577499"/>
<dbReference type="KEGG" id="blo:BL0357"/>
<dbReference type="PATRIC" id="fig|206672.9.peg.1093"/>
<dbReference type="HOGENOM" id="CLU_022398_0_2_11"/>
<dbReference type="OrthoDB" id="9801639at2"/>
<dbReference type="PhylomeDB" id="Q8G7B3"/>
<dbReference type="Proteomes" id="UP000000439">
    <property type="component" value="Chromosome"/>
</dbReference>
<dbReference type="GO" id="GO:0005886">
    <property type="term" value="C:plasma membrane"/>
    <property type="evidence" value="ECO:0007669"/>
    <property type="project" value="UniProtKB-SubCell"/>
</dbReference>
<dbReference type="GO" id="GO:0045259">
    <property type="term" value="C:proton-transporting ATP synthase complex"/>
    <property type="evidence" value="ECO:0007669"/>
    <property type="project" value="UniProtKB-KW"/>
</dbReference>
<dbReference type="GO" id="GO:0005524">
    <property type="term" value="F:ATP binding"/>
    <property type="evidence" value="ECO:0007669"/>
    <property type="project" value="UniProtKB-UniRule"/>
</dbReference>
<dbReference type="GO" id="GO:0016887">
    <property type="term" value="F:ATP hydrolysis activity"/>
    <property type="evidence" value="ECO:0007669"/>
    <property type="project" value="InterPro"/>
</dbReference>
<dbReference type="GO" id="GO:0046933">
    <property type="term" value="F:proton-transporting ATP synthase activity, rotational mechanism"/>
    <property type="evidence" value="ECO:0007669"/>
    <property type="project" value="UniProtKB-UniRule"/>
</dbReference>
<dbReference type="CDD" id="cd18110">
    <property type="entry name" value="ATP-synt_F1_beta_C"/>
    <property type="match status" value="1"/>
</dbReference>
<dbReference type="CDD" id="cd18115">
    <property type="entry name" value="ATP-synt_F1_beta_N"/>
    <property type="match status" value="1"/>
</dbReference>
<dbReference type="CDD" id="cd01133">
    <property type="entry name" value="F1-ATPase_beta_CD"/>
    <property type="match status" value="1"/>
</dbReference>
<dbReference type="FunFam" id="1.10.1140.10:FF:000005">
    <property type="entry name" value="ATP synthase subunit beta"/>
    <property type="match status" value="1"/>
</dbReference>
<dbReference type="FunFam" id="2.40.10.170:FF:000005">
    <property type="entry name" value="ATP synthase subunit beta"/>
    <property type="match status" value="1"/>
</dbReference>
<dbReference type="FunFam" id="3.40.50.300:FF:000004">
    <property type="entry name" value="ATP synthase subunit beta"/>
    <property type="match status" value="1"/>
</dbReference>
<dbReference type="Gene3D" id="2.40.10.170">
    <property type="match status" value="1"/>
</dbReference>
<dbReference type="Gene3D" id="1.10.1140.10">
    <property type="entry name" value="Bovine Mitochondrial F1-atpase, Atp Synthase Beta Chain, Chain D, domain 3"/>
    <property type="match status" value="1"/>
</dbReference>
<dbReference type="Gene3D" id="3.40.50.300">
    <property type="entry name" value="P-loop containing nucleotide triphosphate hydrolases"/>
    <property type="match status" value="1"/>
</dbReference>
<dbReference type="HAMAP" id="MF_01347">
    <property type="entry name" value="ATP_synth_beta_bact"/>
    <property type="match status" value="1"/>
</dbReference>
<dbReference type="InterPro" id="IPR003593">
    <property type="entry name" value="AAA+_ATPase"/>
</dbReference>
<dbReference type="InterPro" id="IPR055190">
    <property type="entry name" value="ATP-synt_VA_C"/>
</dbReference>
<dbReference type="InterPro" id="IPR005722">
    <property type="entry name" value="ATP_synth_F1_bsu"/>
</dbReference>
<dbReference type="InterPro" id="IPR050053">
    <property type="entry name" value="ATPase_alpha/beta_chains"/>
</dbReference>
<dbReference type="InterPro" id="IPR004100">
    <property type="entry name" value="ATPase_F1/V1/A1_a/bsu_N"/>
</dbReference>
<dbReference type="InterPro" id="IPR036121">
    <property type="entry name" value="ATPase_F1/V1/A1_a/bsu_N_sf"/>
</dbReference>
<dbReference type="InterPro" id="IPR000194">
    <property type="entry name" value="ATPase_F1/V1/A1_a/bsu_nucl-bd"/>
</dbReference>
<dbReference type="InterPro" id="IPR024034">
    <property type="entry name" value="ATPase_F1/V1_b/a_C"/>
</dbReference>
<dbReference type="InterPro" id="IPR027417">
    <property type="entry name" value="P-loop_NTPase"/>
</dbReference>
<dbReference type="NCBIfam" id="TIGR01039">
    <property type="entry name" value="atpD"/>
    <property type="match status" value="1"/>
</dbReference>
<dbReference type="PANTHER" id="PTHR15184">
    <property type="entry name" value="ATP SYNTHASE"/>
    <property type="match status" value="1"/>
</dbReference>
<dbReference type="PANTHER" id="PTHR15184:SF71">
    <property type="entry name" value="ATP SYNTHASE SUBUNIT BETA, MITOCHONDRIAL"/>
    <property type="match status" value="1"/>
</dbReference>
<dbReference type="Pfam" id="PF00006">
    <property type="entry name" value="ATP-synt_ab"/>
    <property type="match status" value="1"/>
</dbReference>
<dbReference type="Pfam" id="PF02874">
    <property type="entry name" value="ATP-synt_ab_N"/>
    <property type="match status" value="1"/>
</dbReference>
<dbReference type="Pfam" id="PF22919">
    <property type="entry name" value="ATP-synt_VA_C"/>
    <property type="match status" value="1"/>
</dbReference>
<dbReference type="SMART" id="SM00382">
    <property type="entry name" value="AAA"/>
    <property type="match status" value="1"/>
</dbReference>
<dbReference type="SUPFAM" id="SSF47917">
    <property type="entry name" value="C-terminal domain of alpha and beta subunits of F1 ATP synthase"/>
    <property type="match status" value="1"/>
</dbReference>
<dbReference type="SUPFAM" id="SSF50615">
    <property type="entry name" value="N-terminal domain of alpha and beta subunits of F1 ATP synthase"/>
    <property type="match status" value="1"/>
</dbReference>
<dbReference type="SUPFAM" id="SSF52540">
    <property type="entry name" value="P-loop containing nucleoside triphosphate hydrolases"/>
    <property type="match status" value="1"/>
</dbReference>
<proteinExistence type="inferred from homology"/>
<comment type="function">
    <text evidence="1">Produces ATP from ADP in the presence of a proton gradient across the membrane. The catalytic sites are hosted primarily by the beta subunits.</text>
</comment>
<comment type="catalytic activity">
    <reaction evidence="1">
        <text>ATP + H2O + 4 H(+)(in) = ADP + phosphate + 5 H(+)(out)</text>
        <dbReference type="Rhea" id="RHEA:57720"/>
        <dbReference type="ChEBI" id="CHEBI:15377"/>
        <dbReference type="ChEBI" id="CHEBI:15378"/>
        <dbReference type="ChEBI" id="CHEBI:30616"/>
        <dbReference type="ChEBI" id="CHEBI:43474"/>
        <dbReference type="ChEBI" id="CHEBI:456216"/>
        <dbReference type="EC" id="7.1.2.2"/>
    </reaction>
</comment>
<comment type="subunit">
    <text evidence="1">F-type ATPases have 2 components, CF(1) - the catalytic core - and CF(0) - the membrane proton channel. CF(1) has five subunits: alpha(3), beta(3), gamma(1), delta(1), epsilon(1). CF(0) has three main subunits: a(1), b(2) and c(9-12). The alpha and beta chains form an alternating ring which encloses part of the gamma chain. CF(1) is attached to CF(0) by a central stalk formed by the gamma and epsilon chains, while a peripheral stalk is formed by the delta and b chains.</text>
</comment>
<comment type="subcellular location">
    <subcellularLocation>
        <location evidence="1">Cell membrane</location>
        <topology evidence="1">Peripheral membrane protein</topology>
    </subcellularLocation>
</comment>
<comment type="similarity">
    <text evidence="1">Belongs to the ATPase alpha/beta chains family.</text>
</comment>
<organism>
    <name type="scientific">Bifidobacterium longum (strain NCC 2705)</name>
    <dbReference type="NCBI Taxonomy" id="206672"/>
    <lineage>
        <taxon>Bacteria</taxon>
        <taxon>Bacillati</taxon>
        <taxon>Actinomycetota</taxon>
        <taxon>Actinomycetes</taxon>
        <taxon>Bifidobacteriales</taxon>
        <taxon>Bifidobacteriaceae</taxon>
        <taxon>Bifidobacterium</taxon>
    </lineage>
</organism>
<reference key="1">
    <citation type="journal article" date="2002" name="Proc. Natl. Acad. Sci. U.S.A.">
        <title>The genome sequence of Bifidobacterium longum reflects its adaptation to the human gastrointestinal tract.</title>
        <authorList>
            <person name="Schell M.A."/>
            <person name="Karmirantzou M."/>
            <person name="Snel B."/>
            <person name="Vilanova D."/>
            <person name="Berger B."/>
            <person name="Pessi G."/>
            <person name="Zwahlen M.-C."/>
            <person name="Desiere F."/>
            <person name="Bork P."/>
            <person name="Delley M."/>
            <person name="Pridmore R.D."/>
            <person name="Arigoni F."/>
        </authorList>
    </citation>
    <scope>NUCLEOTIDE SEQUENCE [LARGE SCALE GENOMIC DNA]</scope>
    <source>
        <strain>NCC 2705</strain>
    </source>
</reference>